<dbReference type="EMBL" id="AF081810">
    <property type="protein sequence ID" value="AAC70300.1"/>
    <property type="molecule type" value="Genomic_DNA"/>
</dbReference>
<dbReference type="PIR" id="T30464">
    <property type="entry name" value="T30464"/>
</dbReference>
<dbReference type="RefSeq" id="NP_047751.1">
    <property type="nucleotide sequence ID" value="NC_001973.1"/>
</dbReference>
<dbReference type="SMR" id="Q9YML3"/>
<dbReference type="GeneID" id="1488548"/>
<dbReference type="KEGG" id="vg:1488548"/>
<dbReference type="OrthoDB" id="5316at10239"/>
<dbReference type="Proteomes" id="UP000203997">
    <property type="component" value="Genome"/>
</dbReference>
<dbReference type="InterPro" id="IPR003497">
    <property type="entry name" value="BRO_N_domain"/>
</dbReference>
<dbReference type="Pfam" id="PF02498">
    <property type="entry name" value="Bro-N"/>
    <property type="match status" value="1"/>
</dbReference>
<dbReference type="SMART" id="SM01040">
    <property type="entry name" value="Bro-N"/>
    <property type="match status" value="1"/>
</dbReference>
<dbReference type="PROSITE" id="PS51750">
    <property type="entry name" value="BRO_N"/>
    <property type="match status" value="1"/>
</dbReference>
<organismHost>
    <name type="scientific">Lepidoptera</name>
    <name type="common">butterflies and moths</name>
    <dbReference type="NCBI Taxonomy" id="7088"/>
</organismHost>
<keyword id="KW-1185">Reference proteome</keyword>
<protein>
    <recommendedName>
        <fullName>Uncharacterized Bro-N domain-containing protein J</fullName>
    </recommendedName>
    <alternativeName>
        <fullName>Ld-bro-j</fullName>
    </alternativeName>
</protein>
<feature type="chain" id="PRO_0000250641" description="Uncharacterized Bro-N domain-containing protein J">
    <location>
        <begin position="1"/>
        <end position="403"/>
    </location>
</feature>
<feature type="domain" description="Bro-N" evidence="1">
    <location>
        <begin position="3"/>
        <end position="126"/>
    </location>
</feature>
<proteinExistence type="predicted"/>
<organism>
    <name type="scientific">Lymantria dispar multicapsid nuclear polyhedrosis virus</name>
    <name type="common">LdMNPV</name>
    <dbReference type="NCBI Taxonomy" id="10449"/>
    <lineage>
        <taxon>Viruses</taxon>
        <taxon>Viruses incertae sedis</taxon>
        <taxon>Naldaviricetes</taxon>
        <taxon>Lefavirales</taxon>
        <taxon>Baculoviridae</taxon>
        <taxon>Alphabaculovirus</taxon>
        <taxon>Alphabaculovirus lydisparis</taxon>
    </lineage>
</organism>
<name>BROJ_NPVLD</name>
<accession>Q9YML3</accession>
<reference key="1">
    <citation type="journal article" date="1999" name="Virology">
        <title>Sequence and analysis of the genome of a baculovirus pathogenic for Lymantria dispar.</title>
        <authorList>
            <person name="Kuzio J."/>
            <person name="Pearson M.N."/>
            <person name="Harwood S.H."/>
            <person name="Funk C.J."/>
            <person name="Evans J.T."/>
            <person name="Slavicek J.M."/>
            <person name="Rohrmann G.F."/>
        </authorList>
    </citation>
    <scope>NUCLEOTIDE SEQUENCE [LARGE SCALE GENOMIC DNA]</scope>
</reference>
<sequence>MSQVKIGQFKFGQDTFTLRYVLGGEQQVKFVAKDIASNLKHANCAEAVRKHVDGKYKSTFEHGEIRSHLASNALAKQGDPLYLHPHTVLVTKEGVIQLIMKSKLPYAVELQAWLLEEVIPQVLCTGKYDPAIKHQQEETKRMTDRLIKVFTDHTTTLHAALVKKEKFVEFVVESNNKQIEAKNKLIEAKDQHVTRVMTDLNRMYSSFQDTMQRKDDIMKRKDEIIQKKDEQFQETMQKKDEQFKETIQKKDEQFKETIQKKDEQFQEIIQKKDAQLQETIQRKDEQIARLIDAAMDLSSRAVQYPADERKHPVLCVARDGTTFHGIAGQRRYVQSQKRKLGVKDDDLVLETRRPNPALDWTNATHTTSAVKRSKRSITFDSPEEAQLFEDTIKYLLSVDSVHK</sequence>
<evidence type="ECO:0000255" key="1">
    <source>
        <dbReference type="PROSITE-ProRule" id="PRU01086"/>
    </source>
</evidence>